<sequence length="453" mass="50341">MATKIVLVGAGSAQFGYGTLGDIFQSRALYGSEIILHDINPVALAVTEKTAKDFLAKEDLPFIVSATTDRRTALRGAEFVIISIEVGDRFALWDLDWQIPQQYGIQQVYGENGGPGGLFHSLRIIPPILDICADVADICPDAWIFNYSNPMSRICTTVHRRFPELNFVGMCHEIASLERYLPEMLNTSFDNLSLRAGGLNHFSVLLDARYKDSGKDAYADVRAKAPDYFASLPGYSDILAYTRQHGKLVDTEGSTERHALGGKDSSYPWADRTLFKEILEKFHCMPITVDSHFGEYISWAGEVSDHRGILDFYTFYRNYLGGVQPKIELKLKERVVSIMEGILTDSGYEEAAVNIPNRGFIKQLPEFIAVEVPAIIDRKGVHGIQVDIPPGIGGLLSNQIAIHDLTAEAIIAGSRDLVIQALLVDSVNNQCRAIPELVDVMISRQQPWLNYLK</sequence>
<reference key="1">
    <citation type="journal article" date="2001" name="J. Bacteriol.">
        <title>Cloning and characterization of the gene cluster for palatinose metabolism from the phytopathogenic bacterium Erwinia rhapontici.</title>
        <authorList>
            <person name="Boernke F."/>
            <person name="Hajirezaei M."/>
            <person name="Sonnewald U."/>
        </authorList>
    </citation>
    <scope>NUCLEOTIDE SEQUENCE [GENOMIC DNA]</scope>
    <scope>FUNCTION IN PALATINOSE METABOLISM</scope>
    <scope>PATHWAY</scope>
    <scope>INDUCTION</scope>
    <source>
        <strain>ATCC 29283 / DSM 4484 / LMG 2688 / NCPPB 1578 / ICPB ER102 / CP/28</strain>
    </source>
</reference>
<reference key="2">
    <citation type="journal article" date="2009" name="Mol. Biol. Evol.">
        <title>Evolution and biochemistry of family 4 glycosidases: implications for assigning enzyme function in sequence annotations.</title>
        <authorList>
            <person name="Hall B.G."/>
            <person name="Pikis A."/>
            <person name="Thompson J."/>
        </authorList>
    </citation>
    <scope>PROTEIN SEQUENCE OF 2-26</scope>
    <scope>CATALYTIC ACTIVITY</scope>
    <scope>SUBSTRATE SPECIFICITY</scope>
    <scope>COFACTOR</scope>
    <scope>ACTIVITY REGULATION</scope>
    <scope>KINETIC PARAMETERS</scope>
    <scope>MASS SPECTROMETRY</scope>
    <scope>SUBUNIT</scope>
    <scope>MUTAGENESIS OF GLU-173 AND ILE-174</scope>
    <source>
        <strain>ATCC 29283 / DSM 4484 / LMG 2688 / NCPPB 1578 / ICPB ER102 / CP/28</strain>
    </source>
</reference>
<feature type="initiator methionine" description="Removed" evidence="3">
    <location>
        <position position="1"/>
    </location>
</feature>
<feature type="chain" id="PRO_0000389548" description="Alpha-glucosidase">
    <location>
        <begin position="2"/>
        <end position="453"/>
    </location>
</feature>
<feature type="active site" description="Proton donor" evidence="1">
    <location>
        <position position="172"/>
    </location>
</feature>
<feature type="binding site" evidence="1">
    <location>
        <begin position="3"/>
        <end position="69"/>
    </location>
    <ligand>
        <name>NAD(+)</name>
        <dbReference type="ChEBI" id="CHEBI:57540"/>
    </ligand>
</feature>
<feature type="binding site" evidence="1">
    <location>
        <position position="149"/>
    </location>
    <ligand>
        <name>substrate</name>
    </ligand>
</feature>
<feature type="binding site" evidence="1">
    <location>
        <position position="171"/>
    </location>
    <ligand>
        <name>Mn(2+)</name>
        <dbReference type="ChEBI" id="CHEBI:29035"/>
    </ligand>
</feature>
<feature type="binding site" evidence="1">
    <location>
        <position position="201"/>
    </location>
    <ligand>
        <name>Mn(2+)</name>
        <dbReference type="ChEBI" id="CHEBI:29035"/>
    </ligand>
</feature>
<feature type="mutagenesis site" description="Loss of catalytic activity." evidence="3">
    <original>E</original>
    <variation>S</variation>
    <location>
        <position position="173"/>
    </location>
</feature>
<feature type="mutagenesis site" description="No effect on catalytic activity." evidence="3">
    <original>I</original>
    <variation>V</variation>
    <location>
        <position position="174"/>
    </location>
</feature>
<protein>
    <recommendedName>
        <fullName>Alpha-glucosidase</fullName>
        <ecNumber>3.2.1.20</ecNumber>
    </recommendedName>
</protein>
<name>PALH_ERWRD</name>
<accession>Q9AI65</accession>
<dbReference type="EC" id="3.2.1.20"/>
<dbReference type="EMBL" id="AF279280">
    <property type="protein sequence ID" value="AAK28734.1"/>
    <property type="status" value="ALT_INIT"/>
    <property type="molecule type" value="Genomic_DNA"/>
</dbReference>
<dbReference type="SMR" id="Q9AI65"/>
<dbReference type="CAZy" id="GH4">
    <property type="family name" value="Glycoside Hydrolase Family 4"/>
</dbReference>
<dbReference type="OrthoDB" id="9767022at2"/>
<dbReference type="BRENDA" id="3.2.1.20">
    <property type="organism ID" value="2149"/>
</dbReference>
<dbReference type="BRENDA" id="3.2.1.86">
    <property type="organism ID" value="2149"/>
</dbReference>
<dbReference type="SABIO-RK" id="Q9AI65"/>
<dbReference type="UniPathway" id="UPA01004"/>
<dbReference type="GO" id="GO:0004558">
    <property type="term" value="F:alpha-1,4-glucosidase activity"/>
    <property type="evidence" value="ECO:0007669"/>
    <property type="project" value="UniProtKB-EC"/>
</dbReference>
<dbReference type="GO" id="GO:0046872">
    <property type="term" value="F:metal ion binding"/>
    <property type="evidence" value="ECO:0007669"/>
    <property type="project" value="UniProtKB-KW"/>
</dbReference>
<dbReference type="GO" id="GO:0016616">
    <property type="term" value="F:oxidoreductase activity, acting on the CH-OH group of donors, NAD or NADP as acceptor"/>
    <property type="evidence" value="ECO:0007669"/>
    <property type="project" value="InterPro"/>
</dbReference>
<dbReference type="GO" id="GO:0005975">
    <property type="term" value="P:carbohydrate metabolic process"/>
    <property type="evidence" value="ECO:0007669"/>
    <property type="project" value="InterPro"/>
</dbReference>
<dbReference type="Gene3D" id="3.90.1820.10">
    <property type="entry name" value="AglA-like glucosidase"/>
    <property type="match status" value="1"/>
</dbReference>
<dbReference type="InterPro" id="IPR053715">
    <property type="entry name" value="GH4_Enzyme_sf"/>
</dbReference>
<dbReference type="InterPro" id="IPR001088">
    <property type="entry name" value="Glyco_hydro_4"/>
</dbReference>
<dbReference type="InterPro" id="IPR022616">
    <property type="entry name" value="Glyco_hydro_4_C"/>
</dbReference>
<dbReference type="InterPro" id="IPR015955">
    <property type="entry name" value="Lactate_DH/Glyco_Ohase_4_C"/>
</dbReference>
<dbReference type="InterPro" id="IPR036291">
    <property type="entry name" value="NAD(P)-bd_dom_sf"/>
</dbReference>
<dbReference type="PANTHER" id="PTHR32092">
    <property type="entry name" value="6-PHOSPHO-BETA-GLUCOSIDASE-RELATED"/>
    <property type="match status" value="1"/>
</dbReference>
<dbReference type="PANTHER" id="PTHR32092:SF6">
    <property type="entry name" value="ALPHA-GALACTOSIDASE"/>
    <property type="match status" value="1"/>
</dbReference>
<dbReference type="Pfam" id="PF02056">
    <property type="entry name" value="Glyco_hydro_4"/>
    <property type="match status" value="1"/>
</dbReference>
<dbReference type="Pfam" id="PF11975">
    <property type="entry name" value="Glyco_hydro_4C"/>
    <property type="match status" value="1"/>
</dbReference>
<dbReference type="PRINTS" id="PR00732">
    <property type="entry name" value="GLHYDRLASE4"/>
</dbReference>
<dbReference type="SUPFAM" id="SSF56327">
    <property type="entry name" value="LDH C-terminal domain-like"/>
    <property type="match status" value="1"/>
</dbReference>
<dbReference type="SUPFAM" id="SSF51735">
    <property type="entry name" value="NAD(P)-binding Rossmann-fold domains"/>
    <property type="match status" value="1"/>
</dbReference>
<gene>
    <name type="primary">palH</name>
</gene>
<keyword id="KW-0106">Calcium</keyword>
<keyword id="KW-0119">Carbohydrate metabolism</keyword>
<keyword id="KW-0170">Cobalt</keyword>
<keyword id="KW-0903">Direct protein sequencing</keyword>
<keyword id="KW-0326">Glycosidase</keyword>
<keyword id="KW-0378">Hydrolase</keyword>
<keyword id="KW-0408">Iron</keyword>
<keyword id="KW-0460">Magnesium</keyword>
<keyword id="KW-0464">Manganese</keyword>
<keyword id="KW-0479">Metal-binding</keyword>
<keyword id="KW-0520">NAD</keyword>
<keyword id="KW-0533">Nickel</keyword>
<evidence type="ECO:0000250" key="1"/>
<evidence type="ECO:0000269" key="2">
    <source>
    </source>
</evidence>
<evidence type="ECO:0000269" key="3">
    <source>
    </source>
</evidence>
<evidence type="ECO:0000305" key="4"/>
<proteinExistence type="evidence at protein level"/>
<comment type="function">
    <text evidence="2">Alpha-glucosidase with broad specificity. Hydrolyzes maltose, palatinose, maltulose, trehalose, trehalulose, turanose, leucrose, sucrose and maltitol. Is not active against alpha-galactosides, e.g. melibiose, and alpha-mannosides. Shows an obligate requirement for an O-alpha-glycosidic linkage, since it is not able to cleave beta-glycosidic bonds (cellobiose, gentiobiose, lactose, sophorose or laminaribiose). Cannot hydrolyze phosphorylated alpha-glucosides derivatives. Seems to be involved in the degradation of palatinose, a sucrose isomer that is formed as a reserve material under conditions of excess carbon availability, sequestered in a form unavailable to competitors such as fungi or the host plant, and whose consumption appears to be postponed until the preferentially metabolized carbon source (e.g. sucrose) is depleted.</text>
</comment>
<comment type="catalytic activity">
    <reaction evidence="3">
        <text>Hydrolysis of terminal, non-reducing (1-&gt;4)-linked alpha-D-glucose residues with release of alpha-D-glucose.</text>
        <dbReference type="EC" id="3.2.1.20"/>
    </reaction>
</comment>
<comment type="cofactor">
    <cofactor evidence="3">
        <name>Mn(2+)</name>
        <dbReference type="ChEBI" id="CHEBI:29035"/>
    </cofactor>
    <cofactor evidence="3">
        <name>Co(2+)</name>
        <dbReference type="ChEBI" id="CHEBI:48828"/>
    </cofactor>
    <cofactor evidence="3">
        <name>Ca(2+)</name>
        <dbReference type="ChEBI" id="CHEBI:29108"/>
    </cofactor>
    <cofactor evidence="3">
        <name>Fe(2+)</name>
        <dbReference type="ChEBI" id="CHEBI:29033"/>
    </cofactor>
    <cofactor evidence="3">
        <name>Mg(2+)</name>
        <dbReference type="ChEBI" id="CHEBI:18420"/>
    </cofactor>
    <cofactor evidence="3">
        <name>Sr(2+)</name>
        <dbReference type="ChEBI" id="CHEBI:35104"/>
    </cofactor>
    <cofactor evidence="3">
        <name>Ni(2+)</name>
        <dbReference type="ChEBI" id="CHEBI:49786"/>
    </cofactor>
    <text evidence="3">Binds 1 divalent metal ion per subunit. Mn(2+) is the most efficient metal, but to a lesser extent, can also use Co(2+), Ca(2+), Fe(2+), Mg(2+), Sr(2+), and Ni(2+). Cannot use Zn(2+), Cu(2+) or Cr(2+).</text>
</comment>
<comment type="cofactor">
    <cofactor evidence="3">
        <name>NAD(+)</name>
        <dbReference type="ChEBI" id="CHEBI:57540"/>
    </cofactor>
    <text evidence="3">Binds 1 NAD(+) per subunit.</text>
</comment>
<comment type="activity regulation">
    <text evidence="3">Is inhibited by EDTA in vitro.</text>
</comment>
<comment type="biophysicochemical properties">
    <kinetics>
        <KM evidence="3">8.58 mM for maltose</KM>
        <KM evidence="3">7.31 mM for maltitol</KM>
        <KM evidence="3">6.59 mM for trehalose</KM>
        <KM evidence="3">3.63 mM for trehalulose</KM>
        <KM evidence="3">22.11 mM for sucrose</KM>
        <KM evidence="3">10.04 mM for turanose</KM>
        <KM evidence="3">1.75 mM for maltulose</KM>
        <KM evidence="3">5.31 mM for leucrose</KM>
        <KM evidence="3">2.52 mM for palatinose</KM>
        <KM evidence="3">180 uM for 4-nitrophenyl-alpha-D-glucopyranoside</KM>
        <KM evidence="3">104 uM for NAD(+)</KM>
        <KM evidence="3">47.2 uM for Mn(2+)</KM>
        <Vmax evidence="3">1.01 umol/min/mg enzyme with maltose as substrate</Vmax>
        <Vmax evidence="3">0.24 umol/min/mg enzyme with maltitol as substrate</Vmax>
        <Vmax evidence="3">0.51 umol/min/mg enzyme with trehalose as substrate</Vmax>
        <Vmax evidence="3">0.47 umol/min/mg enzyme with trehalulose as substrate</Vmax>
        <Vmax evidence="3">0.31 umol/min/mg enzyme with sucrose as substrate</Vmax>
        <Vmax evidence="3">0.46 umol/min/mg enzyme with turanose as substrate</Vmax>
        <Vmax evidence="3">0.53 umol/min/mg enzyme with maltulose as substrate</Vmax>
        <Vmax evidence="3">0.44 umol/min/mg enzyme with leucrose as substrate</Vmax>
        <Vmax evidence="3">0.7 umol/min/mg enzyme with palatinose as substrate</Vmax>
        <Vmax evidence="3">6.01 umol/min/mg enzyme with 4-nitrophenyl-alpha-D-glucopyranoside as substrate</Vmax>
    </kinetics>
</comment>
<comment type="pathway">
    <text evidence="2">Glycan degradation; palatinose degradation.</text>
</comment>
<comment type="subunit">
    <text evidence="3">Homotetramer.</text>
</comment>
<comment type="induction">
    <text evidence="2">Down-regulated by sucrose and up-regulated by palatinose.</text>
</comment>
<comment type="mass spectrometry" mass="50216.0" method="Electrospray" evidence="3"/>
<comment type="similarity">
    <text evidence="4">Belongs to the glycosyl hydrolase 4 family.</text>
</comment>
<comment type="sequence caution" evidence="4">
    <conflict type="erroneous initiation">
        <sequence resource="EMBL-CDS" id="AAK28734"/>
    </conflict>
</comment>
<organism>
    <name type="scientific">Erwinia rhapontici</name>
    <name type="common">Pectobacterium rhapontici</name>
    <dbReference type="NCBI Taxonomy" id="55212"/>
    <lineage>
        <taxon>Bacteria</taxon>
        <taxon>Pseudomonadati</taxon>
        <taxon>Pseudomonadota</taxon>
        <taxon>Gammaproteobacteria</taxon>
        <taxon>Enterobacterales</taxon>
        <taxon>Erwiniaceae</taxon>
        <taxon>Erwinia</taxon>
    </lineage>
</organism>